<proteinExistence type="evidence at protein level"/>
<protein>
    <recommendedName>
        <fullName>Putative acyl-CoA thioester hydrolase YbhC</fullName>
        <ecNumber>3.1.2.-</ecNumber>
    </recommendedName>
</protein>
<accession>P46130</accession>
<accession>P75765</accession>
<evidence type="ECO:0000250" key="1"/>
<evidence type="ECO:0000255" key="2">
    <source>
        <dbReference type="PROSITE-ProRule" id="PRU10040"/>
    </source>
</evidence>
<evidence type="ECO:0000256" key="3">
    <source>
        <dbReference type="SAM" id="MobiDB-lite"/>
    </source>
</evidence>
<evidence type="ECO:0000269" key="4">
    <source>
    </source>
</evidence>
<evidence type="ECO:0000269" key="5">
    <source>
    </source>
</evidence>
<evidence type="ECO:0000305" key="6"/>
<evidence type="ECO:0000305" key="7">
    <source>
    </source>
</evidence>
<evidence type="ECO:0007829" key="8">
    <source>
        <dbReference type="PDB" id="3GRH"/>
    </source>
</evidence>
<name>YBHC_ECOLI</name>
<reference key="1">
    <citation type="journal article" date="1997" name="Science">
        <title>The complete genome sequence of Escherichia coli K-12.</title>
        <authorList>
            <person name="Blattner F.R."/>
            <person name="Plunkett G. III"/>
            <person name="Bloch C.A."/>
            <person name="Perna N.T."/>
            <person name="Burland V."/>
            <person name="Riley M."/>
            <person name="Collado-Vides J."/>
            <person name="Glasner J.D."/>
            <person name="Rode C.K."/>
            <person name="Mayhew G.F."/>
            <person name="Gregor J."/>
            <person name="Davis N.W."/>
            <person name="Kirkpatrick H.A."/>
            <person name="Goeden M.A."/>
            <person name="Rose D.J."/>
            <person name="Mau B."/>
            <person name="Shao Y."/>
        </authorList>
    </citation>
    <scope>NUCLEOTIDE SEQUENCE [LARGE SCALE GENOMIC DNA]</scope>
    <source>
        <strain>K12 / MG1655 / ATCC 47076</strain>
    </source>
</reference>
<reference key="2">
    <citation type="journal article" date="2006" name="Mol. Syst. Biol.">
        <title>Highly accurate genome sequences of Escherichia coli K-12 strains MG1655 and W3110.</title>
        <authorList>
            <person name="Hayashi K."/>
            <person name="Morooka N."/>
            <person name="Yamamoto Y."/>
            <person name="Fujita K."/>
            <person name="Isono K."/>
            <person name="Choi S."/>
            <person name="Ohtsubo E."/>
            <person name="Baba T."/>
            <person name="Wanner B.L."/>
            <person name="Mori H."/>
            <person name="Horiuchi T."/>
        </authorList>
    </citation>
    <scope>NUCLEOTIDE SEQUENCE [LARGE SCALE GENOMIC DNA]</scope>
    <source>
        <strain>K12 / W3110 / ATCC 27325 / DSM 5911</strain>
    </source>
</reference>
<reference key="3">
    <citation type="journal article" date="1996" name="DNA Res.">
        <title>A 718-kb DNA sequence of the Escherichia coli K-12 genome corresponding to the 12.7-28.0 min region on the linkage map.</title>
        <authorList>
            <person name="Oshima T."/>
            <person name="Aiba H."/>
            <person name="Baba T."/>
            <person name="Fujita K."/>
            <person name="Hayashi K."/>
            <person name="Honjo A."/>
            <person name="Ikemoto K."/>
            <person name="Inada T."/>
            <person name="Itoh T."/>
            <person name="Kajihara M."/>
            <person name="Kanai K."/>
            <person name="Kashimoto K."/>
            <person name="Kimura S."/>
            <person name="Kitagawa M."/>
            <person name="Makino K."/>
            <person name="Masuda S."/>
            <person name="Miki T."/>
            <person name="Mizobuchi K."/>
            <person name="Mori H."/>
            <person name="Motomura K."/>
            <person name="Nakamura Y."/>
            <person name="Nashimoto H."/>
            <person name="Nishio Y."/>
            <person name="Saito N."/>
            <person name="Sampei G."/>
            <person name="Seki Y."/>
            <person name="Tagami H."/>
            <person name="Takemoto K."/>
            <person name="Wada C."/>
            <person name="Yamamoto Y."/>
            <person name="Yano M."/>
            <person name="Horiuchi T."/>
        </authorList>
    </citation>
    <scope>NUCLEOTIDE SEQUENCE [LARGE SCALE GENOMIC DNA] OF 33-427</scope>
    <source>
        <strain>K12 / W3110 / ATCC 27325 / DSM 5911</strain>
    </source>
</reference>
<reference key="4">
    <citation type="submission" date="1995-11" db="EMBL/GenBank/DDBJ databases">
        <authorList>
            <person name="Taylor A."/>
            <person name="Smith G.R."/>
            <person name="Gardner J.F."/>
        </authorList>
    </citation>
    <scope>NUCLEOTIDE SEQUENCE [GENOMIC DNA] OF 1-300</scope>
    <source>
        <strain>K12</strain>
    </source>
</reference>
<reference key="5">
    <citation type="journal article" date="1977" name="Science">
        <title>Viral integration and excision: structure of the lambda att sites.</title>
        <authorList>
            <person name="Landy A."/>
            <person name="Ross W."/>
        </authorList>
    </citation>
    <scope>NUCLEOTIDE SEQUENCE [GENOMIC DNA] OF 1-39</scope>
</reference>
<reference key="6">
    <citation type="journal article" date="1995" name="Nucleic Acids Res.">
        <title>Detection of new genes in a bacterial genome using Markov models for three gene classes.</title>
        <authorList>
            <person name="Borodovsky M."/>
            <person name="McIninch J."/>
            <person name="Koonin E.V."/>
            <person name="Rudd K.E."/>
            <person name="Medigue C."/>
            <person name="Danchin A."/>
        </authorList>
    </citation>
    <scope>IDENTIFICATION</scope>
</reference>
<reference key="7">
    <citation type="journal article" date="2000" name="Eur. J. Biochem.">
        <title>Proteomic analysis of the Escherichia coli outer membrane.</title>
        <authorList>
            <person name="Molloy M.P."/>
            <person name="Herbert B.R."/>
            <person name="Slade M.B."/>
            <person name="Rabilloud T."/>
            <person name="Nouwens A.S."/>
            <person name="Williams K.L."/>
            <person name="Gooley A.A."/>
        </authorList>
    </citation>
    <scope>IDENTIFICATION BY MASS SPECTROMETRY</scope>
</reference>
<reference key="8">
    <citation type="journal article" date="2005" name="FEMS Microbiol. Rev.">
        <title>Enzyme genomics: application of general enzymatic screens to discover new enzymes.</title>
        <authorList>
            <person name="Kuznetsova E."/>
            <person name="Proudfoot M."/>
            <person name="Sanders S.A."/>
            <person name="Reinking J."/>
            <person name="Savchenko A."/>
            <person name="Arrowsmith C.H."/>
            <person name="Edwards A.M."/>
            <person name="Yakunin A.F."/>
        </authorList>
    </citation>
    <scope>FUNCTION</scope>
</reference>
<reference key="9">
    <citation type="journal article" date="2009" name="Proteins">
        <title>The crystal structure of the outer membrane lipoprotein YbhC from Escherichia coli sheds new light on the phylogeny of carbohydrate esterase family 8.</title>
        <authorList>
            <person name="Ekloef J.M."/>
            <person name="Tan T.-C."/>
            <person name="Divne C."/>
            <person name="Brumer H."/>
        </authorList>
    </citation>
    <scope>X-RAY CRYSTALLOGRAPHY (1.7 ANGSTROMS) OF 29-427</scope>
    <scope>ABSENCE OF PECTINASE ACTIVITY</scope>
    <scope>ABSENCE OF PECTIN BINDING</scope>
    <scope>ABSENCE OF ACYL COENZYME A ESTERASE ACTIVITY</scope>
    <scope>DISULFIDE BOND</scope>
    <scope>FUNCTION</scope>
</reference>
<dbReference type="EC" id="3.1.2.-"/>
<dbReference type="EMBL" id="U00096">
    <property type="protein sequence ID" value="AAC73859.1"/>
    <property type="molecule type" value="Genomic_DNA"/>
</dbReference>
<dbReference type="EMBL" id="AP009048">
    <property type="protein sequence ID" value="BAA35436.2"/>
    <property type="molecule type" value="Genomic_DNA"/>
</dbReference>
<dbReference type="EMBL" id="U39938">
    <property type="status" value="NOT_ANNOTATED_CDS"/>
    <property type="molecule type" value="Genomic_DNA"/>
</dbReference>
<dbReference type="EMBL" id="J01638">
    <property type="status" value="NOT_ANNOTATED_CDS"/>
    <property type="molecule type" value="Genomic_DNA"/>
</dbReference>
<dbReference type="PIR" id="D64813">
    <property type="entry name" value="D64813"/>
</dbReference>
<dbReference type="RefSeq" id="NP_415293.1">
    <property type="nucleotide sequence ID" value="NC_000913.3"/>
</dbReference>
<dbReference type="RefSeq" id="WP_001091569.1">
    <property type="nucleotide sequence ID" value="NZ_STEB01000028.1"/>
</dbReference>
<dbReference type="PDB" id="3GRH">
    <property type="method" value="X-ray"/>
    <property type="resolution" value="1.70 A"/>
    <property type="chains" value="A=29-427"/>
</dbReference>
<dbReference type="PDBsum" id="3GRH"/>
<dbReference type="SMR" id="P46130"/>
<dbReference type="BioGRID" id="4261839">
    <property type="interactions" value="26"/>
</dbReference>
<dbReference type="DIP" id="DIP-11407N"/>
<dbReference type="FunCoup" id="P46130">
    <property type="interactions" value="224"/>
</dbReference>
<dbReference type="IntAct" id="P46130">
    <property type="interactions" value="3"/>
</dbReference>
<dbReference type="STRING" id="511145.b0772"/>
<dbReference type="jPOST" id="P46130"/>
<dbReference type="PaxDb" id="511145-b0772"/>
<dbReference type="EnsemblBacteria" id="AAC73859">
    <property type="protein sequence ID" value="AAC73859"/>
    <property type="gene ID" value="b0772"/>
</dbReference>
<dbReference type="GeneID" id="945381"/>
<dbReference type="KEGG" id="ecj:JW0755"/>
<dbReference type="KEGG" id="eco:b0772"/>
<dbReference type="KEGG" id="ecoc:C3026_03915"/>
<dbReference type="PATRIC" id="fig|1411691.4.peg.1506"/>
<dbReference type="EchoBASE" id="EB2713"/>
<dbReference type="eggNOG" id="COG4677">
    <property type="taxonomic scope" value="Bacteria"/>
</dbReference>
<dbReference type="HOGENOM" id="CLU_012243_5_0_6"/>
<dbReference type="InParanoid" id="P46130"/>
<dbReference type="OMA" id="FNRMWEY"/>
<dbReference type="OrthoDB" id="264773at2"/>
<dbReference type="PhylomeDB" id="P46130"/>
<dbReference type="BioCyc" id="EcoCyc:EG12875-MONOMER"/>
<dbReference type="BRENDA" id="3.1.2.2">
    <property type="organism ID" value="2026"/>
</dbReference>
<dbReference type="EvolutionaryTrace" id="P46130"/>
<dbReference type="PRO" id="PR:P46130"/>
<dbReference type="Proteomes" id="UP000000625">
    <property type="component" value="Chromosome"/>
</dbReference>
<dbReference type="GO" id="GO:0009279">
    <property type="term" value="C:cell outer membrane"/>
    <property type="evidence" value="ECO:0000314"/>
    <property type="project" value="EcoCyc"/>
</dbReference>
<dbReference type="GO" id="GO:0052689">
    <property type="term" value="F:carboxylic ester hydrolase activity"/>
    <property type="evidence" value="ECO:0000318"/>
    <property type="project" value="GO_Central"/>
</dbReference>
<dbReference type="GO" id="GO:0030599">
    <property type="term" value="F:pectinesterase activity"/>
    <property type="evidence" value="ECO:0007669"/>
    <property type="project" value="InterPro"/>
</dbReference>
<dbReference type="GO" id="GO:0042545">
    <property type="term" value="P:cell wall modification"/>
    <property type="evidence" value="ECO:0007669"/>
    <property type="project" value="InterPro"/>
</dbReference>
<dbReference type="FunFam" id="2.160.20.10:FF:000010">
    <property type="entry name" value="Pectinesterase"/>
    <property type="match status" value="1"/>
</dbReference>
<dbReference type="Gene3D" id="2.160.20.10">
    <property type="entry name" value="Single-stranded right-handed beta-helix, Pectin lyase-like"/>
    <property type="match status" value="1"/>
</dbReference>
<dbReference type="InterPro" id="IPR012334">
    <property type="entry name" value="Pectin_lyas_fold"/>
</dbReference>
<dbReference type="InterPro" id="IPR011050">
    <property type="entry name" value="Pectin_lyase_fold/virulence"/>
</dbReference>
<dbReference type="InterPro" id="IPR033131">
    <property type="entry name" value="Pectinesterase_Asp_AS"/>
</dbReference>
<dbReference type="InterPro" id="IPR000070">
    <property type="entry name" value="Pectinesterase_cat"/>
</dbReference>
<dbReference type="NCBIfam" id="NF007822">
    <property type="entry name" value="PRK10531.1"/>
    <property type="match status" value="1"/>
</dbReference>
<dbReference type="PANTHER" id="PTHR31321">
    <property type="entry name" value="ACYL-COA THIOESTER HYDROLASE YBHC-RELATED"/>
    <property type="match status" value="1"/>
</dbReference>
<dbReference type="PANTHER" id="PTHR31321:SF57">
    <property type="entry name" value="PECTINESTERASE 53-RELATED"/>
    <property type="match status" value="1"/>
</dbReference>
<dbReference type="Pfam" id="PF01095">
    <property type="entry name" value="Pectinesterase"/>
    <property type="match status" value="1"/>
</dbReference>
<dbReference type="SUPFAM" id="SSF51126">
    <property type="entry name" value="Pectin lyase-like"/>
    <property type="match status" value="1"/>
</dbReference>
<dbReference type="PROSITE" id="PS00800">
    <property type="entry name" value="PECTINESTERASE_1"/>
    <property type="match status" value="1"/>
</dbReference>
<dbReference type="PROSITE" id="PS00503">
    <property type="entry name" value="PECTINESTERASE_2"/>
    <property type="match status" value="1"/>
</dbReference>
<keyword id="KW-0002">3D-structure</keyword>
<keyword id="KW-0063">Aspartyl esterase</keyword>
<keyword id="KW-0998">Cell outer membrane</keyword>
<keyword id="KW-1015">Disulfide bond</keyword>
<keyword id="KW-0378">Hydrolase</keyword>
<keyword id="KW-0449">Lipoprotein</keyword>
<keyword id="KW-0472">Membrane</keyword>
<keyword id="KW-0564">Palmitate</keyword>
<keyword id="KW-1185">Reference proteome</keyword>
<keyword id="KW-0732">Signal</keyword>
<organism>
    <name type="scientific">Escherichia coli (strain K12)</name>
    <dbReference type="NCBI Taxonomy" id="83333"/>
    <lineage>
        <taxon>Bacteria</taxon>
        <taxon>Pseudomonadati</taxon>
        <taxon>Pseudomonadota</taxon>
        <taxon>Gammaproteobacteria</taxon>
        <taxon>Enterobacterales</taxon>
        <taxon>Enterobacteriaceae</taxon>
        <taxon>Escherichia</taxon>
    </lineage>
</organism>
<gene>
    <name type="primary">ybhC</name>
    <name type="ordered locus">b0772</name>
    <name type="ordered locus">JW0755</name>
</gene>
<sequence length="427" mass="46082">MNTFSVSRLALALAFGVTLTACSSTPPDQRPSDQTAPGTSSRPILSAKEAQNFDAQHYFASLTPGAAAWNPSPITLPAQPDFVVGPAGTQGVTHTTIQAAVDAAIIKRTNKRQYIAVMPGEYQGTVYVPAAPGGITLYGTGEKPIDVKIGLSLDGGMSPADWRHDVNPRGKYMPGKPAWYMYDSCQSKRSDSIGVLCSAVFWSQNNGLQLQNLTIENTLGDSVDAGNHPAVALRTDGDQVQINNVNILGRQNTFFVTNSGVQNRLETNRQPRTLVTNSYIEGDVDIVSGRGAVVFDNTEFRVVNSRTQQEAYVFAPATLSNIYYGFLAVNSRFNAFGDGVAQLGRSLDVDANTNGQVVIRDSAINEGFNTAKPWADAVISNRPFAGNTGSVDDNDEIQRNLNDTNYNRMWEYNNRGVGSKVVAEAKK</sequence>
<feature type="signal peptide" evidence="1">
    <location>
        <begin position="1"/>
        <end position="21"/>
    </location>
</feature>
<feature type="chain" id="PRO_0000023502" description="Putative acyl-CoA thioester hydrolase YbhC">
    <location>
        <begin position="22"/>
        <end position="427"/>
    </location>
</feature>
<feature type="region of interest" description="Disordered" evidence="3">
    <location>
        <begin position="23"/>
        <end position="42"/>
    </location>
</feature>
<feature type="active site" description="Nucleophile" evidence="2">
    <location>
        <position position="285"/>
    </location>
</feature>
<feature type="binding site" evidence="1">
    <location>
        <position position="345"/>
    </location>
    <ligand>
        <name>substrate</name>
    </ligand>
</feature>
<feature type="lipid moiety-binding region" description="N-palmitoyl cysteine" evidence="6">
    <location>
        <position position="22"/>
    </location>
</feature>
<feature type="lipid moiety-binding region" description="S-diacylglycerol cysteine" evidence="6">
    <location>
        <position position="22"/>
    </location>
</feature>
<feature type="disulfide bond" evidence="5">
    <location>
        <begin position="185"/>
        <end position="197"/>
    </location>
</feature>
<feature type="sequence conflict" description="In Ref. 4." evidence="6" ref="4">
    <original>N</original>
    <variation>Q</variation>
    <location>
        <position position="167"/>
    </location>
</feature>
<feature type="strand" evidence="8">
    <location>
        <begin position="42"/>
        <end position="44"/>
    </location>
</feature>
<feature type="helix" evidence="8">
    <location>
        <begin position="47"/>
        <end position="50"/>
    </location>
</feature>
<feature type="helix" evidence="8">
    <location>
        <begin position="55"/>
        <end position="58"/>
    </location>
</feature>
<feature type="strand" evidence="8">
    <location>
        <begin position="62"/>
        <end position="65"/>
    </location>
</feature>
<feature type="strand" evidence="8">
    <location>
        <begin position="81"/>
        <end position="84"/>
    </location>
</feature>
<feature type="strand" evidence="8">
    <location>
        <begin position="94"/>
        <end position="96"/>
    </location>
</feature>
<feature type="helix" evidence="8">
    <location>
        <begin position="97"/>
        <end position="105"/>
    </location>
</feature>
<feature type="strand" evidence="8">
    <location>
        <begin position="113"/>
        <end position="117"/>
    </location>
</feature>
<feature type="strand" evidence="8">
    <location>
        <begin position="119"/>
        <end position="124"/>
    </location>
</feature>
<feature type="strand" evidence="8">
    <location>
        <begin position="126"/>
        <end position="128"/>
    </location>
</feature>
<feature type="strand" evidence="8">
    <location>
        <begin position="135"/>
        <end position="139"/>
    </location>
</feature>
<feature type="strand" evidence="8">
    <location>
        <begin position="141"/>
        <end position="143"/>
    </location>
</feature>
<feature type="helix" evidence="8">
    <location>
        <begin position="144"/>
        <end position="146"/>
    </location>
</feature>
<feature type="strand" evidence="8">
    <location>
        <begin position="147"/>
        <end position="151"/>
    </location>
</feature>
<feature type="helix" evidence="8">
    <location>
        <begin position="159"/>
        <end position="166"/>
    </location>
</feature>
<feature type="helix" evidence="8">
    <location>
        <begin position="168"/>
        <end position="170"/>
    </location>
</feature>
<feature type="helix" evidence="8">
    <location>
        <begin position="179"/>
        <end position="186"/>
    </location>
</feature>
<feature type="strand" evidence="8">
    <location>
        <begin position="190"/>
        <end position="192"/>
    </location>
</feature>
<feature type="helix" evidence="8">
    <location>
        <begin position="195"/>
        <end position="197"/>
    </location>
</feature>
<feature type="strand" evidence="8">
    <location>
        <begin position="200"/>
        <end position="203"/>
    </location>
</feature>
<feature type="strand" evidence="8">
    <location>
        <begin position="209"/>
        <end position="217"/>
    </location>
</feature>
<feature type="helix" evidence="8">
    <location>
        <begin position="220"/>
        <end position="222"/>
    </location>
</feature>
<feature type="strand" evidence="8">
    <location>
        <begin position="232"/>
        <end position="235"/>
    </location>
</feature>
<feature type="strand" evidence="8">
    <location>
        <begin position="238"/>
        <end position="248"/>
    </location>
</feature>
<feature type="strand" evidence="8">
    <location>
        <begin position="254"/>
        <end position="256"/>
    </location>
</feature>
<feature type="strand" evidence="8">
    <location>
        <begin position="272"/>
        <end position="277"/>
    </location>
</feature>
<feature type="strand" evidence="8">
    <location>
        <begin position="279"/>
        <end position="297"/>
    </location>
</feature>
<feature type="strand" evidence="8">
    <location>
        <begin position="299"/>
        <end position="302"/>
    </location>
</feature>
<feature type="strand" evidence="8">
    <location>
        <begin position="312"/>
        <end position="316"/>
    </location>
</feature>
<feature type="strand" evidence="8">
    <location>
        <begin position="326"/>
        <end position="330"/>
    </location>
</feature>
<feature type="strand" evidence="8">
    <location>
        <begin position="332"/>
        <end position="335"/>
    </location>
</feature>
<feature type="strand" evidence="8">
    <location>
        <begin position="337"/>
        <end position="339"/>
    </location>
</feature>
<feature type="strand" evidence="8">
    <location>
        <begin position="341"/>
        <end position="347"/>
    </location>
</feature>
<feature type="strand" evidence="8">
    <location>
        <begin position="356"/>
        <end position="361"/>
    </location>
</feature>
<feature type="strand" evidence="8">
    <location>
        <begin position="374"/>
        <end position="378"/>
    </location>
</feature>
<feature type="strand" evidence="8">
    <location>
        <begin position="390"/>
        <end position="392"/>
    </location>
</feature>
<feature type="turn" evidence="8">
    <location>
        <begin position="393"/>
        <end position="395"/>
    </location>
</feature>
<feature type="strand" evidence="8">
    <location>
        <begin position="396"/>
        <end position="398"/>
    </location>
</feature>
<feature type="strand" evidence="8">
    <location>
        <begin position="408"/>
        <end position="413"/>
    </location>
</feature>
<feature type="helix" evidence="8">
    <location>
        <begin position="417"/>
        <end position="419"/>
    </location>
</feature>
<comment type="function">
    <text evidence="4 5">Putative thioesterase. Does not bind pectin, and has no pectinesterase activity.</text>
</comment>
<comment type="subcellular location">
    <subcellularLocation>
        <location evidence="6">Cell outer membrane</location>
        <topology evidence="6">Lipid-anchor</topology>
    </subcellularLocation>
</comment>
<comment type="similarity">
    <text evidence="6">Belongs to the pectinesterase family.</text>
</comment>
<comment type="caution">
    <text evidence="7">Lacks the conserved Asp residue in position 252 essential for pectinase activity. Likewise, most of the residues involved in substrate binding are not conserved. Was originally (PubMed:15808744) thought to have palmitoyl-CoA thioesterase activity, but PubMed:19452549 were unable to detect any pectinase or palmitoyl-CoA thioesterase activity. Its enzyme activity is therefore unsure.</text>
</comment>
<comment type="sequence caution" evidence="6">
    <conflict type="frameshift">
        <sequence resource="EMBL" id="U39938"/>
    </conflict>
</comment>